<protein>
    <recommendedName>
        <fullName>Autophagy-related protein 2</fullName>
    </recommendedName>
</protein>
<dbReference type="EMBL" id="CH476621">
    <property type="protein sequence ID" value="EDN91477.1"/>
    <property type="molecule type" value="Genomic_DNA"/>
</dbReference>
<dbReference type="RefSeq" id="XP_001598791.1">
    <property type="nucleotide sequence ID" value="XM_001598741.1"/>
</dbReference>
<dbReference type="STRING" id="665079.A7E6F5"/>
<dbReference type="EnsemblFungi" id="EDN91477">
    <property type="protein sequence ID" value="EDN91477"/>
    <property type="gene ID" value="SS1G_00880"/>
</dbReference>
<dbReference type="GeneID" id="5495034"/>
<dbReference type="KEGG" id="ssl:SS1G_00880"/>
<dbReference type="eggNOG" id="KOG2993">
    <property type="taxonomic scope" value="Eukaryota"/>
</dbReference>
<dbReference type="HOGENOM" id="CLU_000626_1_0_1"/>
<dbReference type="InParanoid" id="A7E6F5"/>
<dbReference type="OMA" id="AVWKRAP"/>
<dbReference type="Proteomes" id="UP000001312">
    <property type="component" value="Unassembled WGS sequence"/>
</dbReference>
<dbReference type="GO" id="GO:0005789">
    <property type="term" value="C:endoplasmic reticulum membrane"/>
    <property type="evidence" value="ECO:0007669"/>
    <property type="project" value="UniProtKB-SubCell"/>
</dbReference>
<dbReference type="GO" id="GO:0061908">
    <property type="term" value="C:phagophore"/>
    <property type="evidence" value="ECO:0000318"/>
    <property type="project" value="GO_Central"/>
</dbReference>
<dbReference type="GO" id="GO:0000407">
    <property type="term" value="C:phagophore assembly site"/>
    <property type="evidence" value="ECO:0000318"/>
    <property type="project" value="GO_Central"/>
</dbReference>
<dbReference type="GO" id="GO:0034045">
    <property type="term" value="C:phagophore assembly site membrane"/>
    <property type="evidence" value="ECO:0007669"/>
    <property type="project" value="UniProtKB-SubCell"/>
</dbReference>
<dbReference type="GO" id="GO:0032266">
    <property type="term" value="F:phosphatidylinositol-3-phosphate binding"/>
    <property type="evidence" value="ECO:0000318"/>
    <property type="project" value="GO_Central"/>
</dbReference>
<dbReference type="GO" id="GO:0043495">
    <property type="term" value="F:protein-membrane adaptor activity"/>
    <property type="evidence" value="ECO:0000318"/>
    <property type="project" value="GO_Central"/>
</dbReference>
<dbReference type="GO" id="GO:0000045">
    <property type="term" value="P:autophagosome assembly"/>
    <property type="evidence" value="ECO:0000318"/>
    <property type="project" value="GO_Central"/>
</dbReference>
<dbReference type="GO" id="GO:0000422">
    <property type="term" value="P:autophagy of mitochondrion"/>
    <property type="evidence" value="ECO:0000318"/>
    <property type="project" value="GO_Central"/>
</dbReference>
<dbReference type="GO" id="GO:0061723">
    <property type="term" value="P:glycophagy"/>
    <property type="evidence" value="ECO:0000318"/>
    <property type="project" value="GO_Central"/>
</dbReference>
<dbReference type="GO" id="GO:0006869">
    <property type="term" value="P:lipid transport"/>
    <property type="evidence" value="ECO:0007669"/>
    <property type="project" value="UniProtKB-KW"/>
</dbReference>
<dbReference type="GO" id="GO:0000425">
    <property type="term" value="P:pexophagy"/>
    <property type="evidence" value="ECO:0000318"/>
    <property type="project" value="GO_Central"/>
</dbReference>
<dbReference type="GO" id="GO:0034727">
    <property type="term" value="P:piecemeal microautophagy of the nucleus"/>
    <property type="evidence" value="ECO:0000318"/>
    <property type="project" value="GO_Central"/>
</dbReference>
<dbReference type="GO" id="GO:0015031">
    <property type="term" value="P:protein transport"/>
    <property type="evidence" value="ECO:0007669"/>
    <property type="project" value="UniProtKB-KW"/>
</dbReference>
<dbReference type="GO" id="GO:0061709">
    <property type="term" value="P:reticulophagy"/>
    <property type="evidence" value="ECO:0000318"/>
    <property type="project" value="GO_Central"/>
</dbReference>
<dbReference type="InterPro" id="IPR026849">
    <property type="entry name" value="ATG2"/>
</dbReference>
<dbReference type="PANTHER" id="PTHR13190">
    <property type="entry name" value="AUTOPHAGY-RELATED 2, ISOFORM A"/>
    <property type="match status" value="1"/>
</dbReference>
<dbReference type="PANTHER" id="PTHR13190:SF1">
    <property type="entry name" value="AUTOPHAGY-RELATED 2, ISOFORM A"/>
    <property type="match status" value="1"/>
</dbReference>
<dbReference type="Pfam" id="PF13329">
    <property type="entry name" value="ATG2_CAD"/>
    <property type="match status" value="1"/>
</dbReference>
<name>ATG2_SCLS1</name>
<feature type="chain" id="PRO_0000317813" description="Autophagy-related protein 2">
    <location>
        <begin position="1"/>
        <end position="2159"/>
    </location>
</feature>
<feature type="region of interest" description="Disordered" evidence="3">
    <location>
        <begin position="98"/>
        <end position="126"/>
    </location>
</feature>
<feature type="region of interest" description="Disordered" evidence="3">
    <location>
        <begin position="292"/>
        <end position="403"/>
    </location>
</feature>
<feature type="region of interest" description="Disordered" evidence="3">
    <location>
        <begin position="428"/>
        <end position="475"/>
    </location>
</feature>
<feature type="region of interest" description="Disordered" evidence="3">
    <location>
        <begin position="490"/>
        <end position="552"/>
    </location>
</feature>
<feature type="region of interest" description="Disordered" evidence="3">
    <location>
        <begin position="585"/>
        <end position="612"/>
    </location>
</feature>
<feature type="region of interest" description="Disordered" evidence="3">
    <location>
        <begin position="624"/>
        <end position="682"/>
    </location>
</feature>
<feature type="region of interest" description="Disordered" evidence="3">
    <location>
        <begin position="726"/>
        <end position="766"/>
    </location>
</feature>
<feature type="region of interest" description="Disordered" evidence="3">
    <location>
        <begin position="980"/>
        <end position="1001"/>
    </location>
</feature>
<feature type="compositionally biased region" description="Basic and acidic residues" evidence="3">
    <location>
        <begin position="300"/>
        <end position="315"/>
    </location>
</feature>
<feature type="compositionally biased region" description="Basic and acidic residues" evidence="3">
    <location>
        <begin position="380"/>
        <end position="401"/>
    </location>
</feature>
<feature type="compositionally biased region" description="Polar residues" evidence="3">
    <location>
        <begin position="449"/>
        <end position="475"/>
    </location>
</feature>
<feature type="compositionally biased region" description="Polar residues" evidence="3">
    <location>
        <begin position="507"/>
        <end position="517"/>
    </location>
</feature>
<feature type="compositionally biased region" description="Polar residues" evidence="3">
    <location>
        <begin position="540"/>
        <end position="549"/>
    </location>
</feature>
<feature type="compositionally biased region" description="Polar residues" evidence="3">
    <location>
        <begin position="630"/>
        <end position="642"/>
    </location>
</feature>
<feature type="compositionally biased region" description="Polar residues" evidence="3">
    <location>
        <begin position="669"/>
        <end position="681"/>
    </location>
</feature>
<feature type="compositionally biased region" description="Basic and acidic residues" evidence="3">
    <location>
        <begin position="728"/>
        <end position="737"/>
    </location>
</feature>
<reference key="1">
    <citation type="journal article" date="2011" name="PLoS Genet.">
        <title>Genomic analysis of the necrotrophic fungal pathogens Sclerotinia sclerotiorum and Botrytis cinerea.</title>
        <authorList>
            <person name="Amselem J."/>
            <person name="Cuomo C.A."/>
            <person name="van Kan J.A.L."/>
            <person name="Viaud M."/>
            <person name="Benito E.P."/>
            <person name="Couloux A."/>
            <person name="Coutinho P.M."/>
            <person name="de Vries R.P."/>
            <person name="Dyer P.S."/>
            <person name="Fillinger S."/>
            <person name="Fournier E."/>
            <person name="Gout L."/>
            <person name="Hahn M."/>
            <person name="Kohn L."/>
            <person name="Lapalu N."/>
            <person name="Plummer K.M."/>
            <person name="Pradier J.-M."/>
            <person name="Quevillon E."/>
            <person name="Sharon A."/>
            <person name="Simon A."/>
            <person name="ten Have A."/>
            <person name="Tudzynski B."/>
            <person name="Tudzynski P."/>
            <person name="Wincker P."/>
            <person name="Andrew M."/>
            <person name="Anthouard V."/>
            <person name="Beever R.E."/>
            <person name="Beffa R."/>
            <person name="Benoit I."/>
            <person name="Bouzid O."/>
            <person name="Brault B."/>
            <person name="Chen Z."/>
            <person name="Choquer M."/>
            <person name="Collemare J."/>
            <person name="Cotton P."/>
            <person name="Danchin E.G."/>
            <person name="Da Silva C."/>
            <person name="Gautier A."/>
            <person name="Giraud C."/>
            <person name="Giraud T."/>
            <person name="Gonzalez C."/>
            <person name="Grossetete S."/>
            <person name="Gueldener U."/>
            <person name="Henrissat B."/>
            <person name="Howlett B.J."/>
            <person name="Kodira C."/>
            <person name="Kretschmer M."/>
            <person name="Lappartient A."/>
            <person name="Leroch M."/>
            <person name="Levis C."/>
            <person name="Mauceli E."/>
            <person name="Neuveglise C."/>
            <person name="Oeser B."/>
            <person name="Pearson M."/>
            <person name="Poulain J."/>
            <person name="Poussereau N."/>
            <person name="Quesneville H."/>
            <person name="Rascle C."/>
            <person name="Schumacher J."/>
            <person name="Segurens B."/>
            <person name="Sexton A."/>
            <person name="Silva E."/>
            <person name="Sirven C."/>
            <person name="Soanes D.M."/>
            <person name="Talbot N.J."/>
            <person name="Templeton M."/>
            <person name="Yandava C."/>
            <person name="Yarden O."/>
            <person name="Zeng Q."/>
            <person name="Rollins J.A."/>
            <person name="Lebrun M.-H."/>
            <person name="Dickman M."/>
        </authorList>
    </citation>
    <scope>NUCLEOTIDE SEQUENCE [LARGE SCALE GENOMIC DNA]</scope>
    <source>
        <strain>ATCC 18683 / 1980 / Ss-1</strain>
    </source>
</reference>
<sequence>MPKRLLQYALSRLEILDTDALDLENLDIAWGKNSTFEFKDVGLRLKKLETLLQLPSTIALSKAKVLLLRLTIPVDVYSSPILVEVDGVDVQLRVKEEKGANSSRTNHDRLRKKSTSRSPGPDPALPTAEDLAASFLQTEPREEKAELEAAILGETQDISESITSSEDGDLEVPVGTGTALSLPAFMARFLQGIVDRLQVRVHGITFNVDVDIPAEGPTPNRTTDPVTVQLKIDDVDIEGVTHDIESAQTRGGKDITSLFKEGKKLICLSNIRGALITEANLFQTLSRSSSILSPAVPHSDISESRRTTEMRRSSEETQAMSVGSVRAFDGVASPSPRPSPASSLRASETSLPEIRRPSTPPRPLKISPSLKASIAASDGGRFDDASEDGHSNRSVSVHEDIDSSEMGDSILHNSAYLDQITESQLLDDHEGDDMRSSPSQYEQERHSAPSENSRTSTPRASTHISPSSSRTLGFNQFPSINRAHNMLQSTMLPPRPHTRFSLERVSHSQPTLPSSTAPLDRSYPVQQPESPLEVDAMSEADSSVSSTLNEEAGDDLAQSQLFSHEDAESMYMSAVSYTSAAPIPGGWADSGTESEDAKSPPATPRGPDAGREKLDNLENARHAVPLDGASDTTPLEQSTILPSGSLHKSARSISSMHPETPRRSPPLYQASSDISVESTASADDYSRMTKQIFSLDQIAIYIPAMNNPSSDPVDAVAESALFGSTFDGHSDSSRSRTMDLPGAFSTHLPREQPSRPSPRPALRTPVQPAKKIEEEKLIEVDVGNLLARFDVSVGRLIYKLVCQIQESMKQEPQAVASSKPTSSSTEPHLKISAKEISLRFLEQLQGTLGSRAAESQAKTLDSDVLLRTTLKGLDVSRKPSDSITKTSITLQKFLFGYAQENIISFNANLQMRASVRDLAASAGIDVSVDMYQSSDGTRFEVQTLPLHVAVDLQRLDETFSWFGGLSSVLNLGSSMASNATVTSNPVPKPKSRGVRFNTPIGPDDKTAAAQNKADVRIGGFILDLVGTECSVGVETSAVKLVSREEGIGVAINKIRLSGPHLKHSNEDPAILVDVSSTRVELLNAPKDNDIDRLLALIAPSKSKYDQDDDILLDTLLRQRQQGSVLRLTMDDLQVKMGNLQELSYLPDLGEEVARLSTVTKYLPDDDRPGLLSLVSVKKLGVNVDVNNTLGSLQLKATDLEVAQIPIPSLVAFSVATVSAYRNYSEELIGAGTDQTFMEPSLRTPTIMARLIGDEMEPIVRIKLWNLRIEYRVPTLMVLLGLADNATENDMSASIMASVATLRDLAQPRTSKGKGKSVEKASASSNSAAKPMTIDVVLTDCIVGLNPLGLPSKILVVLTEAHVAAVLPKDQNASATAELSKASLLVIDNVAHLATNVPSNRKRNSFDGGSNQVADLTTMGYVSVSYISSAKATVLLSVDDDGQNCLDVELRDDLFVLESCADSTQTLIGVLGKLAPPAPPPSKESKYRTKVIPVKDLLASLSGDAFGTAEGNYDFDNDFGDFGDVAEEHEGDLGFDSDYYKDETEEGYRQAVLEDIGEPLASLNLTTRDTRDGVLLDSFVEDSEIGNEALSFHEDHFGTGSVLEGSAHRWNSAKNTYDTSNESKVKKSPLKVCVRDVHIIWNLFDGYDWQATRDAISKAVQDVESKAIEKRARNERRPAFEQDIDDDEDTEIGDFLFNSIWVGIPNNRDPRELAAAINQELNDNATETESIATTNYTITPSRQGTGRKPKKLRLNRSKHHKITFELRGVCVDLVAFPPFSGETQSSIDVRVLDLEVFDHVPTSTWRKFATYMQDAGEREKGSNMVHIEILNVKPVSYLAASEIVLKVTILPLRLHVDQDALDFITRFFEFKEESDVIPGAPSEEPFLQRVEVNSVQVKLDFKPKRVDYAGLRSGHTTEFMNFLILDEADMTLRHTIIYGISGFEKMGKCLNDIWMPDIQRNQLPGILAGLAPVRSIVNVGGGFKDLVVIPMHEYKKDGRIVRSISKGAAAFAKTTGTELVKLGAKVAIGVQTVLQGAEDFLGPQDASIPHGNSSEDEEERKQISLYANQPVGVFQGLKGGYAGLQRDLVMARDAIIAVPGEVMEGGSAKGVLRAVRKHAPTVILRPAIGVAKGAGQVLMGATNSLDKRNLERADAKYKKH</sequence>
<proteinExistence type="inferred from homology"/>
<gene>
    <name type="primary">atg2</name>
    <name type="ORF">SS1G_00880</name>
</gene>
<evidence type="ECO:0000250" key="1">
    <source>
        <dbReference type="UniProtKB" id="O94649"/>
    </source>
</evidence>
<evidence type="ECO:0000250" key="2">
    <source>
        <dbReference type="UniProtKB" id="P53855"/>
    </source>
</evidence>
<evidence type="ECO:0000256" key="3">
    <source>
        <dbReference type="SAM" id="MobiDB-lite"/>
    </source>
</evidence>
<evidence type="ECO:0000305" key="4"/>
<keyword id="KW-0072">Autophagy</keyword>
<keyword id="KW-0256">Endoplasmic reticulum</keyword>
<keyword id="KW-0445">Lipid transport</keyword>
<keyword id="KW-0472">Membrane</keyword>
<keyword id="KW-0653">Protein transport</keyword>
<keyword id="KW-1185">Reference proteome</keyword>
<keyword id="KW-0813">Transport</keyword>
<comment type="function">
    <text evidence="2">Lipid transfer protein required for autophagosome completion and peroxisome degradation. Tethers the edge of the isolation membrane (IM) to the endoplasmic reticulum (ER) and mediates direct lipid transfer from ER to IM for IM expansion. Atg2 binds to the ER exit site (ERES), which is the membrane source for autophagosome formation, using basic residues in its N-terminal region (NR) and to the expanding edge of the IM through its C-terminal region. The latter binding is assisted by an atg18-PtdIns3P interaction. Atg2 then extracts phospholipids from the membrane source using its NR and transfers them to atg9 to the IM through its predicted beta-sheet-rich structure for membrane expansion.</text>
</comment>
<comment type="catalytic activity">
    <reaction evidence="1">
        <text>a 1,2-diacyl-sn-glycero-3-phosphocholine(in) = a 1,2-diacyl-sn-glycero-3-phosphocholine(out)</text>
        <dbReference type="Rhea" id="RHEA:38571"/>
        <dbReference type="ChEBI" id="CHEBI:57643"/>
    </reaction>
</comment>
<comment type="catalytic activity">
    <reaction evidence="1">
        <text>a 1,2-diacyl-sn-glycero-3-phospho-L-serine(in) = a 1,2-diacyl-sn-glycero-3-phospho-L-serine(out)</text>
        <dbReference type="Rhea" id="RHEA:38663"/>
        <dbReference type="ChEBI" id="CHEBI:57262"/>
    </reaction>
</comment>
<comment type="catalytic activity">
    <reaction evidence="1">
        <text>a 1,2-diacyl-sn-glycero-3-phosphoethanolamine(in) = a 1,2-diacyl-sn-glycero-3-phosphoethanolamine(out)</text>
        <dbReference type="Rhea" id="RHEA:38895"/>
        <dbReference type="ChEBI" id="CHEBI:64612"/>
    </reaction>
</comment>
<comment type="subcellular location">
    <subcellularLocation>
        <location evidence="2">Preautophagosomal structure membrane</location>
        <topology evidence="2">Peripheral membrane protein</topology>
    </subcellularLocation>
    <subcellularLocation>
        <location evidence="2">Endoplasmic reticulum membrane</location>
        <topology evidence="2">Peripheral membrane protein</topology>
    </subcellularLocation>
</comment>
<comment type="similarity">
    <text evidence="4">Belongs to the ATG2 family.</text>
</comment>
<organism>
    <name type="scientific">Sclerotinia sclerotiorum (strain ATCC 18683 / 1980 / Ss-1)</name>
    <name type="common">White mold</name>
    <name type="synonym">Whetzelinia sclerotiorum</name>
    <dbReference type="NCBI Taxonomy" id="665079"/>
    <lineage>
        <taxon>Eukaryota</taxon>
        <taxon>Fungi</taxon>
        <taxon>Dikarya</taxon>
        <taxon>Ascomycota</taxon>
        <taxon>Pezizomycotina</taxon>
        <taxon>Leotiomycetes</taxon>
        <taxon>Helotiales</taxon>
        <taxon>Sclerotiniaceae</taxon>
        <taxon>Sclerotinia</taxon>
    </lineage>
</organism>
<accession>A7E6F5</accession>